<proteinExistence type="inferred from homology"/>
<protein>
    <recommendedName>
        <fullName>Chaperone protein DnaK</fullName>
    </recommendedName>
    <alternativeName>
        <fullName>HSP70</fullName>
    </alternativeName>
    <alternativeName>
        <fullName>Heat shock 70 kDa protein</fullName>
    </alternativeName>
    <alternativeName>
        <fullName>Heat shock protein 70</fullName>
    </alternativeName>
</protein>
<dbReference type="EMBL" id="D88673">
    <property type="protein sequence ID" value="BAA21964.1"/>
    <property type="molecule type" value="Genomic_DNA"/>
</dbReference>
<dbReference type="EMBL" id="BA000003">
    <property type="protein sequence ID" value="BAB12871.1"/>
    <property type="molecule type" value="Genomic_DNA"/>
</dbReference>
<dbReference type="RefSeq" id="NP_239985.1">
    <property type="nucleotide sequence ID" value="NC_002528.1"/>
</dbReference>
<dbReference type="RefSeq" id="WP_009874109.1">
    <property type="nucleotide sequence ID" value="NZ_AP036055.1"/>
</dbReference>
<dbReference type="SMR" id="O32464"/>
<dbReference type="STRING" id="563178.BUAP5A_151"/>
<dbReference type="EnsemblBacteria" id="BAB12871">
    <property type="protein sequence ID" value="BAB12871"/>
    <property type="gene ID" value="BAB12871"/>
</dbReference>
<dbReference type="KEGG" id="buc:BU153"/>
<dbReference type="PATRIC" id="fig|107806.10.peg.163"/>
<dbReference type="eggNOG" id="COG0443">
    <property type="taxonomic scope" value="Bacteria"/>
</dbReference>
<dbReference type="HOGENOM" id="CLU_005965_2_1_6"/>
<dbReference type="Proteomes" id="UP000001806">
    <property type="component" value="Chromosome"/>
</dbReference>
<dbReference type="GO" id="GO:0005524">
    <property type="term" value="F:ATP binding"/>
    <property type="evidence" value="ECO:0007669"/>
    <property type="project" value="UniProtKB-UniRule"/>
</dbReference>
<dbReference type="GO" id="GO:0140662">
    <property type="term" value="F:ATP-dependent protein folding chaperone"/>
    <property type="evidence" value="ECO:0007669"/>
    <property type="project" value="InterPro"/>
</dbReference>
<dbReference type="GO" id="GO:0051082">
    <property type="term" value="F:unfolded protein binding"/>
    <property type="evidence" value="ECO:0007669"/>
    <property type="project" value="InterPro"/>
</dbReference>
<dbReference type="CDD" id="cd10234">
    <property type="entry name" value="ASKHA_NBD_HSP70_DnaK-like"/>
    <property type="match status" value="1"/>
</dbReference>
<dbReference type="FunFam" id="2.60.34.10:FF:000014">
    <property type="entry name" value="Chaperone protein DnaK HSP70"/>
    <property type="match status" value="1"/>
</dbReference>
<dbReference type="FunFam" id="1.20.1270.10:FF:000001">
    <property type="entry name" value="Molecular chaperone DnaK"/>
    <property type="match status" value="1"/>
</dbReference>
<dbReference type="FunFam" id="3.30.420.40:FF:000004">
    <property type="entry name" value="Molecular chaperone DnaK"/>
    <property type="match status" value="1"/>
</dbReference>
<dbReference type="FunFam" id="3.90.640.10:FF:000003">
    <property type="entry name" value="Molecular chaperone DnaK"/>
    <property type="match status" value="1"/>
</dbReference>
<dbReference type="Gene3D" id="1.20.1270.10">
    <property type="match status" value="1"/>
</dbReference>
<dbReference type="Gene3D" id="3.30.420.40">
    <property type="match status" value="2"/>
</dbReference>
<dbReference type="Gene3D" id="3.90.640.10">
    <property type="entry name" value="Actin, Chain A, domain 4"/>
    <property type="match status" value="1"/>
</dbReference>
<dbReference type="Gene3D" id="2.60.34.10">
    <property type="entry name" value="Substrate Binding Domain Of DNAk, Chain A, domain 1"/>
    <property type="match status" value="1"/>
</dbReference>
<dbReference type="HAMAP" id="MF_00332">
    <property type="entry name" value="DnaK"/>
    <property type="match status" value="1"/>
</dbReference>
<dbReference type="InterPro" id="IPR043129">
    <property type="entry name" value="ATPase_NBD"/>
</dbReference>
<dbReference type="InterPro" id="IPR012725">
    <property type="entry name" value="Chaperone_DnaK"/>
</dbReference>
<dbReference type="InterPro" id="IPR018181">
    <property type="entry name" value="Heat_shock_70_CS"/>
</dbReference>
<dbReference type="InterPro" id="IPR029048">
    <property type="entry name" value="HSP70_C_sf"/>
</dbReference>
<dbReference type="InterPro" id="IPR029047">
    <property type="entry name" value="HSP70_peptide-bd_sf"/>
</dbReference>
<dbReference type="InterPro" id="IPR013126">
    <property type="entry name" value="Hsp_70_fam"/>
</dbReference>
<dbReference type="NCBIfam" id="NF001413">
    <property type="entry name" value="PRK00290.1"/>
    <property type="match status" value="1"/>
</dbReference>
<dbReference type="NCBIfam" id="NF003520">
    <property type="entry name" value="PRK05183.1"/>
    <property type="match status" value="1"/>
</dbReference>
<dbReference type="NCBIfam" id="TIGR02350">
    <property type="entry name" value="prok_dnaK"/>
    <property type="match status" value="1"/>
</dbReference>
<dbReference type="PANTHER" id="PTHR19375">
    <property type="entry name" value="HEAT SHOCK PROTEIN 70KDA"/>
    <property type="match status" value="1"/>
</dbReference>
<dbReference type="Pfam" id="PF00012">
    <property type="entry name" value="HSP70"/>
    <property type="match status" value="1"/>
</dbReference>
<dbReference type="PRINTS" id="PR00301">
    <property type="entry name" value="HEATSHOCK70"/>
</dbReference>
<dbReference type="SUPFAM" id="SSF53067">
    <property type="entry name" value="Actin-like ATPase domain"/>
    <property type="match status" value="2"/>
</dbReference>
<dbReference type="SUPFAM" id="SSF100934">
    <property type="entry name" value="Heat shock protein 70kD (HSP70), C-terminal subdomain"/>
    <property type="match status" value="1"/>
</dbReference>
<dbReference type="SUPFAM" id="SSF100920">
    <property type="entry name" value="Heat shock protein 70kD (HSP70), peptide-binding domain"/>
    <property type="match status" value="1"/>
</dbReference>
<dbReference type="PROSITE" id="PS00297">
    <property type="entry name" value="HSP70_1"/>
    <property type="match status" value="1"/>
</dbReference>
<dbReference type="PROSITE" id="PS00329">
    <property type="entry name" value="HSP70_2"/>
    <property type="match status" value="1"/>
</dbReference>
<dbReference type="PROSITE" id="PS01036">
    <property type="entry name" value="HSP70_3"/>
    <property type="match status" value="1"/>
</dbReference>
<comment type="function">
    <text evidence="1">Acts as a chaperone.</text>
</comment>
<comment type="induction">
    <text evidence="1">By stress conditions e.g. heat shock (By similarity).</text>
</comment>
<comment type="similarity">
    <text evidence="3">Belongs to the heat shock protein 70 family.</text>
</comment>
<feature type="chain" id="PRO_0000078433" description="Chaperone protein DnaK">
    <location>
        <begin position="1"/>
        <end position="637"/>
    </location>
</feature>
<feature type="region of interest" description="Disordered" evidence="2">
    <location>
        <begin position="599"/>
        <end position="637"/>
    </location>
</feature>
<feature type="compositionally biased region" description="Basic and acidic residues" evidence="2">
    <location>
        <begin position="602"/>
        <end position="623"/>
    </location>
</feature>
<feature type="modified residue" description="Phosphothreonine; by autocatalysis" evidence="1">
    <location>
        <position position="199"/>
    </location>
</feature>
<gene>
    <name type="primary">dnaK</name>
    <name type="ordered locus">BU153</name>
</gene>
<name>DNAK_BUCAI</name>
<organism>
    <name type="scientific">Buchnera aphidicola subsp. Acyrthosiphon pisum (strain APS)</name>
    <name type="common">Acyrthosiphon pisum symbiotic bacterium</name>
    <dbReference type="NCBI Taxonomy" id="107806"/>
    <lineage>
        <taxon>Bacteria</taxon>
        <taxon>Pseudomonadati</taxon>
        <taxon>Pseudomonadota</taxon>
        <taxon>Gammaproteobacteria</taxon>
        <taxon>Enterobacterales</taxon>
        <taxon>Erwiniaceae</taxon>
        <taxon>Buchnera</taxon>
    </lineage>
</organism>
<accession>O32464</accession>
<reference key="1">
    <citation type="journal article" date="1997" name="J. Biochem.">
        <title>Structure and expression of the dnaKJ operon of Buchnera, an intracellular symbiotic bacteria of aphid.</title>
        <authorList>
            <person name="Sato S."/>
            <person name="Ishikawa H."/>
        </authorList>
    </citation>
    <scope>NUCLEOTIDE SEQUENCE [GENOMIC DNA]</scope>
</reference>
<reference key="2">
    <citation type="journal article" date="2000" name="Nature">
        <title>Genome sequence of the endocellular bacterial symbiont of aphids Buchnera sp. APS.</title>
        <authorList>
            <person name="Shigenobu S."/>
            <person name="Watanabe H."/>
            <person name="Hattori M."/>
            <person name="Sakaki Y."/>
            <person name="Ishikawa H."/>
        </authorList>
    </citation>
    <scope>NUCLEOTIDE SEQUENCE [LARGE SCALE GENOMIC DNA]</scope>
    <source>
        <strain>APS</strain>
    </source>
</reference>
<evidence type="ECO:0000250" key="1"/>
<evidence type="ECO:0000256" key="2">
    <source>
        <dbReference type="SAM" id="MobiDB-lite"/>
    </source>
</evidence>
<evidence type="ECO:0000305" key="3"/>
<keyword id="KW-0067">ATP-binding</keyword>
<keyword id="KW-0143">Chaperone</keyword>
<keyword id="KW-0547">Nucleotide-binding</keyword>
<keyword id="KW-0597">Phosphoprotein</keyword>
<keyword id="KW-1185">Reference proteome</keyword>
<keyword id="KW-0346">Stress response</keyword>
<sequence length="637" mass="70042">MGKIIGIDLGTTNSCVAIMDGNKPRVLENAEGDRTTPSIIAYTQEGEVLVGQPAKRQAITNPKNTLFAIKRLIGRKFKDDEVQRDIKIMPYNIVNSDNGDAWIDVKKQKMAPPQISAEVLKKMKKTAEDYLGETIKEAVITVPAYFNDAQRQATKDAGRIAGLEVKRIINEPTAAALAYGLDKGKGNRTIAVYDLGGGTFDISIIEIDEVDKEKTFEVLATNGDTHLGGEDFDSRLINYLVTEFKKEQGIDLRNDPLSMQRLKESAEKAKIELSSAQQTDVNLPYITADSNGPKHLNIKVTRAKLESLVEDLILRSIEPLKVALKDAGLSVTDINDVILVGGQTRMPMVQSKVADFFGKEPRKDVNPDEAVAVGAAVQGGVLSGDVKDVLLLDVTPLSLGIETMGGIMTSLINKNTTIPTKHSQIFSTAEDNQSAVTIHVLQGERKRSSDNKSLGQFNLDGINPAPRGTAQIEVTFDIDSDGILHVSAKDKKTGKEQKITIKASSGLNEEEIKKMVNDAEANSEADQKFEELIQTRNQGDQLVHSIKKQLNENKNSIEEESKKDIQLALNKLENALKGEDKSDIEKNIQNLLKISSKLTEINQKKSEKDQKDNNMSANKKDENVVDAEFEEIKDPKK</sequence>